<protein>
    <recommendedName>
        <fullName evidence="1">NADH-quinone oxidoreductase subunit D 1</fullName>
        <ecNumber evidence="1">7.1.1.-</ecNumber>
    </recommendedName>
    <alternativeName>
        <fullName evidence="1">NADH dehydrogenase I subunit D 1</fullName>
    </alternativeName>
    <alternativeName>
        <fullName evidence="1">NDH-1 subunit D 1</fullName>
    </alternativeName>
</protein>
<name>NUOD1_ANASK</name>
<comment type="function">
    <text evidence="1">NDH-1 shuttles electrons from NADH, via FMN and iron-sulfur (Fe-S) centers, to quinones in the respiratory chain. The immediate electron acceptor for the enzyme in this species is believed to be ubiquinone. Couples the redox reaction to proton translocation (for every two electrons transferred, four hydrogen ions are translocated across the cytoplasmic membrane), and thus conserves the redox energy in a proton gradient.</text>
</comment>
<comment type="catalytic activity">
    <reaction evidence="1">
        <text>a quinone + NADH + 5 H(+)(in) = a quinol + NAD(+) + 4 H(+)(out)</text>
        <dbReference type="Rhea" id="RHEA:57888"/>
        <dbReference type="ChEBI" id="CHEBI:15378"/>
        <dbReference type="ChEBI" id="CHEBI:24646"/>
        <dbReference type="ChEBI" id="CHEBI:57540"/>
        <dbReference type="ChEBI" id="CHEBI:57945"/>
        <dbReference type="ChEBI" id="CHEBI:132124"/>
    </reaction>
</comment>
<comment type="subunit">
    <text evidence="1">NDH-1 is composed of 14 different subunits. Subunits NuoB, C, D, E, F, and G constitute the peripheral sector of the complex.</text>
</comment>
<comment type="subcellular location">
    <subcellularLocation>
        <location evidence="1">Cell inner membrane</location>
        <topology evidence="1">Peripheral membrane protein</topology>
        <orientation evidence="1">Cytoplasmic side</orientation>
    </subcellularLocation>
</comment>
<comment type="similarity">
    <text evidence="1">Belongs to the complex I 49 kDa subunit family.</text>
</comment>
<evidence type="ECO:0000255" key="1">
    <source>
        <dbReference type="HAMAP-Rule" id="MF_01358"/>
    </source>
</evidence>
<dbReference type="EC" id="7.1.1.-" evidence="1"/>
<dbReference type="EMBL" id="CP001131">
    <property type="protein sequence ID" value="ACG72507.1"/>
    <property type="molecule type" value="Genomic_DNA"/>
</dbReference>
<dbReference type="RefSeq" id="WP_012525331.1">
    <property type="nucleotide sequence ID" value="NC_011145.1"/>
</dbReference>
<dbReference type="SMR" id="B4UIA2"/>
<dbReference type="KEGG" id="ank:AnaeK_1274"/>
<dbReference type="HOGENOM" id="CLU_015134_1_2_7"/>
<dbReference type="OrthoDB" id="9801496at2"/>
<dbReference type="Proteomes" id="UP000001871">
    <property type="component" value="Chromosome"/>
</dbReference>
<dbReference type="GO" id="GO:0005886">
    <property type="term" value="C:plasma membrane"/>
    <property type="evidence" value="ECO:0007669"/>
    <property type="project" value="UniProtKB-SubCell"/>
</dbReference>
<dbReference type="GO" id="GO:0051287">
    <property type="term" value="F:NAD binding"/>
    <property type="evidence" value="ECO:0007669"/>
    <property type="project" value="InterPro"/>
</dbReference>
<dbReference type="GO" id="GO:0050136">
    <property type="term" value="F:NADH:ubiquinone reductase (non-electrogenic) activity"/>
    <property type="evidence" value="ECO:0007669"/>
    <property type="project" value="UniProtKB-UniRule"/>
</dbReference>
<dbReference type="GO" id="GO:0048038">
    <property type="term" value="F:quinone binding"/>
    <property type="evidence" value="ECO:0007669"/>
    <property type="project" value="UniProtKB-KW"/>
</dbReference>
<dbReference type="Gene3D" id="1.10.645.10">
    <property type="entry name" value="Cytochrome-c3 Hydrogenase, chain B"/>
    <property type="match status" value="1"/>
</dbReference>
<dbReference type="HAMAP" id="MF_01358">
    <property type="entry name" value="NDH1_NuoD"/>
    <property type="match status" value="1"/>
</dbReference>
<dbReference type="InterPro" id="IPR001135">
    <property type="entry name" value="NADH_Q_OxRdtase_suD"/>
</dbReference>
<dbReference type="InterPro" id="IPR022885">
    <property type="entry name" value="NDH1_su_D/H"/>
</dbReference>
<dbReference type="InterPro" id="IPR029014">
    <property type="entry name" value="NiFe-Hase_large"/>
</dbReference>
<dbReference type="PANTHER" id="PTHR11993:SF10">
    <property type="entry name" value="NADH DEHYDROGENASE [UBIQUINONE] IRON-SULFUR PROTEIN 2, MITOCHONDRIAL"/>
    <property type="match status" value="1"/>
</dbReference>
<dbReference type="PANTHER" id="PTHR11993">
    <property type="entry name" value="NADH-UBIQUINONE OXIDOREDUCTASE 49 KDA SUBUNIT"/>
    <property type="match status" value="1"/>
</dbReference>
<dbReference type="Pfam" id="PF00346">
    <property type="entry name" value="Complex1_49kDa"/>
    <property type="match status" value="2"/>
</dbReference>
<dbReference type="SUPFAM" id="SSF56762">
    <property type="entry name" value="HydB/Nqo4-like"/>
    <property type="match status" value="1"/>
</dbReference>
<reference key="1">
    <citation type="submission" date="2008-08" db="EMBL/GenBank/DDBJ databases">
        <title>Complete sequence of Anaeromyxobacter sp. K.</title>
        <authorList>
            <consortium name="US DOE Joint Genome Institute"/>
            <person name="Lucas S."/>
            <person name="Copeland A."/>
            <person name="Lapidus A."/>
            <person name="Glavina del Rio T."/>
            <person name="Dalin E."/>
            <person name="Tice H."/>
            <person name="Bruce D."/>
            <person name="Goodwin L."/>
            <person name="Pitluck S."/>
            <person name="Saunders E."/>
            <person name="Brettin T."/>
            <person name="Detter J.C."/>
            <person name="Han C."/>
            <person name="Larimer F."/>
            <person name="Land M."/>
            <person name="Hauser L."/>
            <person name="Kyrpides N."/>
            <person name="Ovchinnikiva G."/>
            <person name="Beliaev A."/>
        </authorList>
    </citation>
    <scope>NUCLEOTIDE SEQUENCE [LARGE SCALE GENOMIC DNA]</scope>
    <source>
        <strain>K</strain>
    </source>
</reference>
<proteinExistence type="inferred from homology"/>
<sequence>MEKLILRRVDRQNEEMILNFGPQHPSTHGVINFLVETDGEVLKRATPDVGYLHRSIEKIGEMVGYPGFMPYTDRVDYVAAMFANEGYAIAVERLLKIEVPQRAQWLRAISCELCRIASHLVSVGTMVMDIGAFTPMLHGIRERETINDLLEALCGARLTYNYHRIGGVAFDLPEGWRDKVLHFLDHFDKFLAEFDRLISFNEIYVKRLANVAVIPGPMAINYGLVGPNLRGSGVDWDVRRDLPYGAYPNFKFDVPVGKGFFGTSGDSFDRYYVRCLEMAESSKIVRQALDSLPEGEITAKVPRNIKPEAGEAIGRVESARGELAYYVISDGTNKAYRVRARTGSFTAMCIIEDISRGLMVADLVALISSLDVVAPEIDR</sequence>
<accession>B4UIA2</accession>
<gene>
    <name evidence="1" type="primary">nuoD1</name>
    <name type="ordered locus">AnaeK_1274</name>
</gene>
<organism>
    <name type="scientific">Anaeromyxobacter sp. (strain K)</name>
    <dbReference type="NCBI Taxonomy" id="447217"/>
    <lineage>
        <taxon>Bacteria</taxon>
        <taxon>Pseudomonadati</taxon>
        <taxon>Myxococcota</taxon>
        <taxon>Myxococcia</taxon>
        <taxon>Myxococcales</taxon>
        <taxon>Cystobacterineae</taxon>
        <taxon>Anaeromyxobacteraceae</taxon>
        <taxon>Anaeromyxobacter</taxon>
    </lineage>
</organism>
<keyword id="KW-0997">Cell inner membrane</keyword>
<keyword id="KW-1003">Cell membrane</keyword>
<keyword id="KW-0472">Membrane</keyword>
<keyword id="KW-0520">NAD</keyword>
<keyword id="KW-0874">Quinone</keyword>
<keyword id="KW-1278">Translocase</keyword>
<keyword id="KW-0813">Transport</keyword>
<keyword id="KW-0830">Ubiquinone</keyword>
<feature type="chain" id="PRO_0000357757" description="NADH-quinone oxidoreductase subunit D 1">
    <location>
        <begin position="1"/>
        <end position="379"/>
    </location>
</feature>